<reference key="1">
    <citation type="submission" date="2006-12" db="EMBL/GenBank/DDBJ databases">
        <title>Complete sequence of Chlorobium phaeobacteroides DSM 266.</title>
        <authorList>
            <consortium name="US DOE Joint Genome Institute"/>
            <person name="Copeland A."/>
            <person name="Lucas S."/>
            <person name="Lapidus A."/>
            <person name="Barry K."/>
            <person name="Detter J.C."/>
            <person name="Glavina del Rio T."/>
            <person name="Hammon N."/>
            <person name="Israni S."/>
            <person name="Pitluck S."/>
            <person name="Goltsman E."/>
            <person name="Schmutz J."/>
            <person name="Larimer F."/>
            <person name="Land M."/>
            <person name="Hauser L."/>
            <person name="Mikhailova N."/>
            <person name="Li T."/>
            <person name="Overmann J."/>
            <person name="Bryant D.A."/>
            <person name="Richardson P."/>
        </authorList>
    </citation>
    <scope>NUCLEOTIDE SEQUENCE [LARGE SCALE GENOMIC DNA]</scope>
    <source>
        <strain>DSM 266 / SMG 266 / 2430</strain>
    </source>
</reference>
<evidence type="ECO:0000255" key="1">
    <source>
        <dbReference type="HAMAP-Rule" id="MF_01307"/>
    </source>
</evidence>
<evidence type="ECO:0000305" key="2"/>
<keyword id="KW-1185">Reference proteome</keyword>
<keyword id="KW-0687">Ribonucleoprotein</keyword>
<keyword id="KW-0689">Ribosomal protein</keyword>
<keyword id="KW-0694">RNA-binding</keyword>
<keyword id="KW-0699">rRNA-binding</keyword>
<protein>
    <recommendedName>
        <fullName evidence="1">Small ribosomal subunit protein uS5</fullName>
    </recommendedName>
    <alternativeName>
        <fullName evidence="2">30S ribosomal protein S5</fullName>
    </alternativeName>
</protein>
<dbReference type="EMBL" id="CP000492">
    <property type="protein sequence ID" value="ABL66394.1"/>
    <property type="molecule type" value="Genomic_DNA"/>
</dbReference>
<dbReference type="RefSeq" id="WP_011746176.1">
    <property type="nucleotide sequence ID" value="NC_008639.1"/>
</dbReference>
<dbReference type="SMR" id="A1BJ17"/>
<dbReference type="STRING" id="290317.Cpha266_2406"/>
<dbReference type="KEGG" id="cph:Cpha266_2406"/>
<dbReference type="eggNOG" id="COG0098">
    <property type="taxonomic scope" value="Bacteria"/>
</dbReference>
<dbReference type="HOGENOM" id="CLU_065898_2_2_10"/>
<dbReference type="OrthoDB" id="9809045at2"/>
<dbReference type="Proteomes" id="UP000008701">
    <property type="component" value="Chromosome"/>
</dbReference>
<dbReference type="GO" id="GO:0015935">
    <property type="term" value="C:small ribosomal subunit"/>
    <property type="evidence" value="ECO:0007669"/>
    <property type="project" value="InterPro"/>
</dbReference>
<dbReference type="GO" id="GO:0019843">
    <property type="term" value="F:rRNA binding"/>
    <property type="evidence" value="ECO:0007669"/>
    <property type="project" value="UniProtKB-UniRule"/>
</dbReference>
<dbReference type="GO" id="GO:0003735">
    <property type="term" value="F:structural constituent of ribosome"/>
    <property type="evidence" value="ECO:0007669"/>
    <property type="project" value="InterPro"/>
</dbReference>
<dbReference type="GO" id="GO:0006412">
    <property type="term" value="P:translation"/>
    <property type="evidence" value="ECO:0007669"/>
    <property type="project" value="UniProtKB-UniRule"/>
</dbReference>
<dbReference type="FunFam" id="3.30.160.20:FF:000001">
    <property type="entry name" value="30S ribosomal protein S5"/>
    <property type="match status" value="1"/>
</dbReference>
<dbReference type="FunFam" id="3.30.230.10:FF:000002">
    <property type="entry name" value="30S ribosomal protein S5"/>
    <property type="match status" value="1"/>
</dbReference>
<dbReference type="Gene3D" id="3.30.160.20">
    <property type="match status" value="1"/>
</dbReference>
<dbReference type="Gene3D" id="3.30.230.10">
    <property type="match status" value="1"/>
</dbReference>
<dbReference type="HAMAP" id="MF_01307_B">
    <property type="entry name" value="Ribosomal_uS5_B"/>
    <property type="match status" value="1"/>
</dbReference>
<dbReference type="InterPro" id="IPR020568">
    <property type="entry name" value="Ribosomal_Su5_D2-typ_SF"/>
</dbReference>
<dbReference type="InterPro" id="IPR000851">
    <property type="entry name" value="Ribosomal_uS5"/>
</dbReference>
<dbReference type="InterPro" id="IPR005712">
    <property type="entry name" value="Ribosomal_uS5_bac-type"/>
</dbReference>
<dbReference type="InterPro" id="IPR005324">
    <property type="entry name" value="Ribosomal_uS5_C"/>
</dbReference>
<dbReference type="InterPro" id="IPR013810">
    <property type="entry name" value="Ribosomal_uS5_N"/>
</dbReference>
<dbReference type="InterPro" id="IPR018192">
    <property type="entry name" value="Ribosomal_uS5_N_CS"/>
</dbReference>
<dbReference type="InterPro" id="IPR014721">
    <property type="entry name" value="Ribsml_uS5_D2-typ_fold_subgr"/>
</dbReference>
<dbReference type="NCBIfam" id="TIGR01021">
    <property type="entry name" value="rpsE_bact"/>
    <property type="match status" value="1"/>
</dbReference>
<dbReference type="PANTHER" id="PTHR48277">
    <property type="entry name" value="MITOCHONDRIAL RIBOSOMAL PROTEIN S5"/>
    <property type="match status" value="1"/>
</dbReference>
<dbReference type="PANTHER" id="PTHR48277:SF1">
    <property type="entry name" value="MITOCHONDRIAL RIBOSOMAL PROTEIN S5"/>
    <property type="match status" value="1"/>
</dbReference>
<dbReference type="Pfam" id="PF00333">
    <property type="entry name" value="Ribosomal_S5"/>
    <property type="match status" value="1"/>
</dbReference>
<dbReference type="Pfam" id="PF03719">
    <property type="entry name" value="Ribosomal_S5_C"/>
    <property type="match status" value="1"/>
</dbReference>
<dbReference type="SUPFAM" id="SSF54768">
    <property type="entry name" value="dsRNA-binding domain-like"/>
    <property type="match status" value="1"/>
</dbReference>
<dbReference type="SUPFAM" id="SSF54211">
    <property type="entry name" value="Ribosomal protein S5 domain 2-like"/>
    <property type="match status" value="1"/>
</dbReference>
<dbReference type="PROSITE" id="PS00585">
    <property type="entry name" value="RIBOSOMAL_S5"/>
    <property type="match status" value="1"/>
</dbReference>
<dbReference type="PROSITE" id="PS50881">
    <property type="entry name" value="S5_DSRBD"/>
    <property type="match status" value="1"/>
</dbReference>
<name>RS5_CHLPD</name>
<proteinExistence type="inferred from homology"/>
<gene>
    <name evidence="1" type="primary">rpsE</name>
    <name type="ordered locus">Cpha266_2406</name>
</gene>
<organism>
    <name type="scientific">Chlorobium phaeobacteroides (strain DSM 266 / SMG 266 / 2430)</name>
    <dbReference type="NCBI Taxonomy" id="290317"/>
    <lineage>
        <taxon>Bacteria</taxon>
        <taxon>Pseudomonadati</taxon>
        <taxon>Chlorobiota</taxon>
        <taxon>Chlorobiia</taxon>
        <taxon>Chlorobiales</taxon>
        <taxon>Chlorobiaceae</taxon>
        <taxon>Chlorobium/Pelodictyon group</taxon>
        <taxon>Chlorobium</taxon>
    </lineage>
</organism>
<sequence length="172" mass="18119">MAKTSARSIKPGELNLKEKLVHINRTAKVVKGGKRFGFNAIIVVGDKEGHVGYGLGKANEVQDAIAKGVEDGKKNVIKVPIVKGTIPHQIIAKYGSAKVLMKPATPGTGLIAGGAVRAVLEMAGIHDVLTKSLGSSNPHNVVKAAIKGLQSMSDAYEVGERRSKSLKEVFES</sequence>
<comment type="function">
    <text evidence="1">With S4 and S12 plays an important role in translational accuracy.</text>
</comment>
<comment type="function">
    <text evidence="1">Located at the back of the 30S subunit body where it stabilizes the conformation of the head with respect to the body.</text>
</comment>
<comment type="subunit">
    <text evidence="1">Part of the 30S ribosomal subunit. Contacts proteins S4 and S8.</text>
</comment>
<comment type="domain">
    <text>The N-terminal domain interacts with the head of the 30S subunit; the C-terminal domain interacts with the body and contacts protein S4. The interaction surface between S4 and S5 is involved in control of translational fidelity.</text>
</comment>
<comment type="similarity">
    <text evidence="1">Belongs to the universal ribosomal protein uS5 family.</text>
</comment>
<accession>A1BJ17</accession>
<feature type="chain" id="PRO_0000323104" description="Small ribosomal subunit protein uS5">
    <location>
        <begin position="1"/>
        <end position="172"/>
    </location>
</feature>
<feature type="domain" description="S5 DRBM" evidence="1">
    <location>
        <begin position="16"/>
        <end position="79"/>
    </location>
</feature>